<proteinExistence type="inferred from homology"/>
<sequence length="299" mass="33636">MVEKSRLRIAMQKSGRLSKESQQLLEKCGIKIHLQQQRLLAFAENMPIDIMRVRDDDIPGLVLDSVVDLGIIGQNVLEEELLTRRAQGENPRYVTLRRLDFGTCRLSIALPIDQAWNGPKCLQNKRIATSYPHLLKQYLDKLGISFKSCLLNGSVEVAPRAGLADAICDLVSTGATLEANGLREVEVIYRSKAYLIQRDGELSLSKQALVDKLMIRIQGVIQARESKYIMMHAPTERLDNIISLLPGAERPTVLPLASDHNLVVMHMVSRETLFWETMENLKALGARSILVLPIEKMME</sequence>
<gene>
    <name evidence="1" type="primary">hisG</name>
    <name type="ordered locus">BCI_0405</name>
</gene>
<organism>
    <name type="scientific">Baumannia cicadellinicola subsp. Homalodisca coagulata</name>
    <dbReference type="NCBI Taxonomy" id="374463"/>
    <lineage>
        <taxon>Bacteria</taxon>
        <taxon>Pseudomonadati</taxon>
        <taxon>Pseudomonadota</taxon>
        <taxon>Gammaproteobacteria</taxon>
        <taxon>Candidatus Palibaumannia</taxon>
    </lineage>
</organism>
<reference key="1">
    <citation type="journal article" date="2006" name="PLoS Biol.">
        <title>Metabolic complementarity and genomics of the dual bacterial symbiosis of sharpshooters.</title>
        <authorList>
            <person name="Wu D."/>
            <person name="Daugherty S.C."/>
            <person name="Van Aken S.E."/>
            <person name="Pai G.H."/>
            <person name="Watkins K.L."/>
            <person name="Khouri H."/>
            <person name="Tallon L.J."/>
            <person name="Zaborsky J.M."/>
            <person name="Dunbar H.E."/>
            <person name="Tran P.L."/>
            <person name="Moran N.A."/>
            <person name="Eisen J.A."/>
        </authorList>
    </citation>
    <scope>NUCLEOTIDE SEQUENCE [LARGE SCALE GENOMIC DNA]</scope>
</reference>
<feature type="chain" id="PRO_1000004445" description="ATP phosphoribosyltransferase">
    <location>
        <begin position="1"/>
        <end position="299"/>
    </location>
</feature>
<name>HIS1_BAUCH</name>
<dbReference type="EC" id="2.4.2.17" evidence="1"/>
<dbReference type="EMBL" id="CP000238">
    <property type="protein sequence ID" value="ABF13790.1"/>
    <property type="molecule type" value="Genomic_DNA"/>
</dbReference>
<dbReference type="RefSeq" id="WP_011520581.1">
    <property type="nucleotide sequence ID" value="NC_007984.1"/>
</dbReference>
<dbReference type="SMR" id="Q1LT66"/>
<dbReference type="STRING" id="374463.BCI_0405"/>
<dbReference type="KEGG" id="bci:BCI_0405"/>
<dbReference type="HOGENOM" id="CLU_038115_1_0_6"/>
<dbReference type="OrthoDB" id="9801867at2"/>
<dbReference type="UniPathway" id="UPA00031">
    <property type="reaction ID" value="UER00006"/>
</dbReference>
<dbReference type="Proteomes" id="UP000002427">
    <property type="component" value="Chromosome"/>
</dbReference>
<dbReference type="GO" id="GO:0005737">
    <property type="term" value="C:cytoplasm"/>
    <property type="evidence" value="ECO:0007669"/>
    <property type="project" value="UniProtKB-SubCell"/>
</dbReference>
<dbReference type="GO" id="GO:0005524">
    <property type="term" value="F:ATP binding"/>
    <property type="evidence" value="ECO:0007669"/>
    <property type="project" value="UniProtKB-KW"/>
</dbReference>
<dbReference type="GO" id="GO:0003879">
    <property type="term" value="F:ATP phosphoribosyltransferase activity"/>
    <property type="evidence" value="ECO:0007669"/>
    <property type="project" value="UniProtKB-UniRule"/>
</dbReference>
<dbReference type="GO" id="GO:0000287">
    <property type="term" value="F:magnesium ion binding"/>
    <property type="evidence" value="ECO:0007669"/>
    <property type="project" value="UniProtKB-UniRule"/>
</dbReference>
<dbReference type="GO" id="GO:0000105">
    <property type="term" value="P:L-histidine biosynthetic process"/>
    <property type="evidence" value="ECO:0007669"/>
    <property type="project" value="UniProtKB-UniRule"/>
</dbReference>
<dbReference type="CDD" id="cd13592">
    <property type="entry name" value="PBP2_HisGL2"/>
    <property type="match status" value="1"/>
</dbReference>
<dbReference type="FunFam" id="3.30.70.120:FF:000002">
    <property type="entry name" value="ATP phosphoribosyltransferase"/>
    <property type="match status" value="1"/>
</dbReference>
<dbReference type="FunFam" id="3.40.190.10:FF:000008">
    <property type="entry name" value="ATP phosphoribosyltransferase"/>
    <property type="match status" value="1"/>
</dbReference>
<dbReference type="Gene3D" id="3.30.70.120">
    <property type="match status" value="1"/>
</dbReference>
<dbReference type="Gene3D" id="3.40.190.10">
    <property type="entry name" value="Periplasmic binding protein-like II"/>
    <property type="match status" value="2"/>
</dbReference>
<dbReference type="HAMAP" id="MF_00079">
    <property type="entry name" value="HisG_Long"/>
    <property type="match status" value="1"/>
</dbReference>
<dbReference type="InterPro" id="IPR020621">
    <property type="entry name" value="ATP-PRT_HisG_long"/>
</dbReference>
<dbReference type="InterPro" id="IPR013820">
    <property type="entry name" value="ATP_PRibTrfase_cat"/>
</dbReference>
<dbReference type="InterPro" id="IPR018198">
    <property type="entry name" value="ATP_PRibTrfase_CS"/>
</dbReference>
<dbReference type="InterPro" id="IPR001348">
    <property type="entry name" value="ATP_PRibTrfase_HisG"/>
</dbReference>
<dbReference type="InterPro" id="IPR013115">
    <property type="entry name" value="HisG_C"/>
</dbReference>
<dbReference type="InterPro" id="IPR011322">
    <property type="entry name" value="N-reg_PII-like_a/b"/>
</dbReference>
<dbReference type="InterPro" id="IPR015867">
    <property type="entry name" value="N-reg_PII/ATP_PRibTrfase_C"/>
</dbReference>
<dbReference type="NCBIfam" id="TIGR00070">
    <property type="entry name" value="hisG"/>
    <property type="match status" value="1"/>
</dbReference>
<dbReference type="NCBIfam" id="TIGR03455">
    <property type="entry name" value="HisG_C-term"/>
    <property type="match status" value="1"/>
</dbReference>
<dbReference type="PANTHER" id="PTHR21403:SF8">
    <property type="entry name" value="ATP PHOSPHORIBOSYLTRANSFERASE"/>
    <property type="match status" value="1"/>
</dbReference>
<dbReference type="PANTHER" id="PTHR21403">
    <property type="entry name" value="ATP PHOSPHORIBOSYLTRANSFERASE ATP-PRTASE"/>
    <property type="match status" value="1"/>
</dbReference>
<dbReference type="Pfam" id="PF01634">
    <property type="entry name" value="HisG"/>
    <property type="match status" value="1"/>
</dbReference>
<dbReference type="Pfam" id="PF08029">
    <property type="entry name" value="HisG_C"/>
    <property type="match status" value="1"/>
</dbReference>
<dbReference type="SUPFAM" id="SSF54913">
    <property type="entry name" value="GlnB-like"/>
    <property type="match status" value="1"/>
</dbReference>
<dbReference type="SUPFAM" id="SSF53850">
    <property type="entry name" value="Periplasmic binding protein-like II"/>
    <property type="match status" value="1"/>
</dbReference>
<dbReference type="PROSITE" id="PS01316">
    <property type="entry name" value="ATP_P_PHORIBOSYLTR"/>
    <property type="match status" value="1"/>
</dbReference>
<evidence type="ECO:0000255" key="1">
    <source>
        <dbReference type="HAMAP-Rule" id="MF_00079"/>
    </source>
</evidence>
<accession>Q1LT66</accession>
<protein>
    <recommendedName>
        <fullName evidence="1">ATP phosphoribosyltransferase</fullName>
        <shortName evidence="1">ATP-PRT</shortName>
        <shortName evidence="1">ATP-PRTase</shortName>
        <ecNumber evidence="1">2.4.2.17</ecNumber>
    </recommendedName>
</protein>
<keyword id="KW-0028">Amino-acid biosynthesis</keyword>
<keyword id="KW-0067">ATP-binding</keyword>
<keyword id="KW-0963">Cytoplasm</keyword>
<keyword id="KW-0328">Glycosyltransferase</keyword>
<keyword id="KW-0368">Histidine biosynthesis</keyword>
<keyword id="KW-0460">Magnesium</keyword>
<keyword id="KW-0479">Metal-binding</keyword>
<keyword id="KW-0547">Nucleotide-binding</keyword>
<keyword id="KW-1185">Reference proteome</keyword>
<keyword id="KW-0808">Transferase</keyword>
<comment type="function">
    <text evidence="1">Catalyzes the condensation of ATP and 5-phosphoribose 1-diphosphate to form N'-(5'-phosphoribosyl)-ATP (PR-ATP). Has a crucial role in the pathway because the rate of histidine biosynthesis seems to be controlled primarily by regulation of HisG enzymatic activity.</text>
</comment>
<comment type="catalytic activity">
    <reaction evidence="1">
        <text>1-(5-phospho-beta-D-ribosyl)-ATP + diphosphate = 5-phospho-alpha-D-ribose 1-diphosphate + ATP</text>
        <dbReference type="Rhea" id="RHEA:18473"/>
        <dbReference type="ChEBI" id="CHEBI:30616"/>
        <dbReference type="ChEBI" id="CHEBI:33019"/>
        <dbReference type="ChEBI" id="CHEBI:58017"/>
        <dbReference type="ChEBI" id="CHEBI:73183"/>
        <dbReference type="EC" id="2.4.2.17"/>
    </reaction>
</comment>
<comment type="cofactor">
    <cofactor evidence="1">
        <name>Mg(2+)</name>
        <dbReference type="ChEBI" id="CHEBI:18420"/>
    </cofactor>
</comment>
<comment type="activity regulation">
    <text evidence="1">Feedback inhibited by histidine.</text>
</comment>
<comment type="pathway">
    <text evidence="1">Amino-acid biosynthesis; L-histidine biosynthesis; L-histidine from 5-phospho-alpha-D-ribose 1-diphosphate: step 1/9.</text>
</comment>
<comment type="subcellular location">
    <subcellularLocation>
        <location evidence="1">Cytoplasm</location>
    </subcellularLocation>
</comment>
<comment type="similarity">
    <text evidence="1">Belongs to the ATP phosphoribosyltransferase family. Long subfamily.</text>
</comment>